<name>SCONB_ASPFN</name>
<dbReference type="EMBL" id="EQ963478">
    <property type="protein sequence ID" value="EED51039.1"/>
    <property type="molecule type" value="Genomic_DNA"/>
</dbReference>
<dbReference type="RefSeq" id="XP_002379815.1">
    <property type="nucleotide sequence ID" value="XM_002379774.1"/>
</dbReference>
<dbReference type="SMR" id="B8NGT5"/>
<dbReference type="STRING" id="332952.B8NGT5"/>
<dbReference type="EnsemblFungi" id="EED51039">
    <property type="protein sequence ID" value="EED51039"/>
    <property type="gene ID" value="AFLA_138030"/>
</dbReference>
<dbReference type="VEuPathDB" id="FungiDB:AFLA_006171"/>
<dbReference type="eggNOG" id="KOG0274">
    <property type="taxonomic scope" value="Eukaryota"/>
</dbReference>
<dbReference type="HOGENOM" id="CLU_000288_103_1_1"/>
<dbReference type="OMA" id="GIAHVWS"/>
<dbReference type="UniPathway" id="UPA00143"/>
<dbReference type="GO" id="GO:0016567">
    <property type="term" value="P:protein ubiquitination"/>
    <property type="evidence" value="ECO:0007669"/>
    <property type="project" value="UniProtKB-UniPathway"/>
</dbReference>
<dbReference type="CDD" id="cd22147">
    <property type="entry name" value="F-box_SpPof1-like"/>
    <property type="match status" value="1"/>
</dbReference>
<dbReference type="CDD" id="cd00200">
    <property type="entry name" value="WD40"/>
    <property type="match status" value="1"/>
</dbReference>
<dbReference type="FunFam" id="1.20.1280.50:FF:000016">
    <property type="entry name" value="E3 ubiquitin ligase complex SCF subunit sconB"/>
    <property type="match status" value="1"/>
</dbReference>
<dbReference type="FunFam" id="2.130.10.10:FF:000770">
    <property type="entry name" value="E3 ubiquitin ligase complex SCF subunit sconB"/>
    <property type="match status" value="1"/>
</dbReference>
<dbReference type="FunFam" id="2.130.10.10:FF:000890">
    <property type="entry name" value="Probable E3 ubiquitin ligase complex SCF subunit sconB"/>
    <property type="match status" value="1"/>
</dbReference>
<dbReference type="Gene3D" id="1.20.1280.50">
    <property type="match status" value="1"/>
</dbReference>
<dbReference type="Gene3D" id="2.130.10.10">
    <property type="entry name" value="YVTN repeat-like/Quinoprotein amine dehydrogenase"/>
    <property type="match status" value="3"/>
</dbReference>
<dbReference type="InterPro" id="IPR036047">
    <property type="entry name" value="F-box-like_dom_sf"/>
</dbReference>
<dbReference type="InterPro" id="IPR001810">
    <property type="entry name" value="F-box_dom"/>
</dbReference>
<dbReference type="InterPro" id="IPR020472">
    <property type="entry name" value="G-protein_beta_WD-40_rep"/>
</dbReference>
<dbReference type="InterPro" id="IPR051075">
    <property type="entry name" value="SCF_subunit_WD-repeat"/>
</dbReference>
<dbReference type="InterPro" id="IPR015943">
    <property type="entry name" value="WD40/YVTN_repeat-like_dom_sf"/>
</dbReference>
<dbReference type="InterPro" id="IPR019775">
    <property type="entry name" value="WD40_repeat_CS"/>
</dbReference>
<dbReference type="InterPro" id="IPR036322">
    <property type="entry name" value="WD40_repeat_dom_sf"/>
</dbReference>
<dbReference type="InterPro" id="IPR001680">
    <property type="entry name" value="WD40_rpt"/>
</dbReference>
<dbReference type="PANTHER" id="PTHR19872">
    <property type="entry name" value="UBIQUITIN LIGASE SPECIFICITY FACTOR/HREP PROTEIN"/>
    <property type="match status" value="1"/>
</dbReference>
<dbReference type="PANTHER" id="PTHR19872:SF9">
    <property type="entry name" value="UBIQUITIN-BINDING SDF UBIQUITIN LIGASE COMPLEX SUBUNIT"/>
    <property type="match status" value="1"/>
</dbReference>
<dbReference type="Pfam" id="PF12937">
    <property type="entry name" value="F-box-like"/>
    <property type="match status" value="1"/>
</dbReference>
<dbReference type="Pfam" id="PF00400">
    <property type="entry name" value="WD40"/>
    <property type="match status" value="6"/>
</dbReference>
<dbReference type="PRINTS" id="PR00320">
    <property type="entry name" value="GPROTEINBRPT"/>
</dbReference>
<dbReference type="SMART" id="SM00256">
    <property type="entry name" value="FBOX"/>
    <property type="match status" value="1"/>
</dbReference>
<dbReference type="SMART" id="SM00320">
    <property type="entry name" value="WD40"/>
    <property type="match status" value="7"/>
</dbReference>
<dbReference type="SUPFAM" id="SSF81383">
    <property type="entry name" value="F-box domain"/>
    <property type="match status" value="1"/>
</dbReference>
<dbReference type="SUPFAM" id="SSF50978">
    <property type="entry name" value="WD40 repeat-like"/>
    <property type="match status" value="1"/>
</dbReference>
<dbReference type="PROSITE" id="PS50181">
    <property type="entry name" value="FBOX"/>
    <property type="match status" value="1"/>
</dbReference>
<dbReference type="PROSITE" id="PS00678">
    <property type="entry name" value="WD_REPEATS_1"/>
    <property type="match status" value="4"/>
</dbReference>
<dbReference type="PROSITE" id="PS50082">
    <property type="entry name" value="WD_REPEATS_2"/>
    <property type="match status" value="7"/>
</dbReference>
<dbReference type="PROSITE" id="PS50294">
    <property type="entry name" value="WD_REPEATS_REGION"/>
    <property type="match status" value="1"/>
</dbReference>
<feature type="chain" id="PRO_0000397247" description="Probable E3 ubiquitin ligase complex SCF subunit sconB">
    <location>
        <begin position="1"/>
        <end position="706"/>
    </location>
</feature>
<feature type="domain" description="F-box" evidence="2">
    <location>
        <begin position="203"/>
        <end position="249"/>
    </location>
</feature>
<feature type="repeat" description="WD 1">
    <location>
        <begin position="377"/>
        <end position="414"/>
    </location>
</feature>
<feature type="repeat" description="WD 2">
    <location>
        <begin position="417"/>
        <end position="456"/>
    </location>
</feature>
<feature type="repeat" description="WD 3">
    <location>
        <begin position="458"/>
        <end position="494"/>
    </location>
</feature>
<feature type="repeat" description="WD 4">
    <location>
        <begin position="496"/>
        <end position="537"/>
    </location>
</feature>
<feature type="repeat" description="WD 5">
    <location>
        <begin position="589"/>
        <end position="632"/>
    </location>
</feature>
<feature type="repeat" description="WD 6">
    <location>
        <begin position="635"/>
        <end position="672"/>
    </location>
</feature>
<feature type="repeat" description="WD 7">
    <location>
        <begin position="675"/>
        <end position="706"/>
    </location>
</feature>
<feature type="region of interest" description="Disordered" evidence="3">
    <location>
        <begin position="1"/>
        <end position="43"/>
    </location>
</feature>
<feature type="region of interest" description="Disordered" evidence="3">
    <location>
        <begin position="56"/>
        <end position="76"/>
    </location>
</feature>
<feature type="compositionally biased region" description="Basic and acidic residues" evidence="3">
    <location>
        <begin position="1"/>
        <end position="12"/>
    </location>
</feature>
<feature type="compositionally biased region" description="Low complexity" evidence="3">
    <location>
        <begin position="34"/>
        <end position="43"/>
    </location>
</feature>
<organism>
    <name type="scientific">Aspergillus flavus (strain ATCC 200026 / FGSC A1120 / IAM 13836 / NRRL 3357 / JCM 12722 / SRRC 167)</name>
    <dbReference type="NCBI Taxonomy" id="332952"/>
    <lineage>
        <taxon>Eukaryota</taxon>
        <taxon>Fungi</taxon>
        <taxon>Dikarya</taxon>
        <taxon>Ascomycota</taxon>
        <taxon>Pezizomycotina</taxon>
        <taxon>Eurotiomycetes</taxon>
        <taxon>Eurotiomycetidae</taxon>
        <taxon>Eurotiales</taxon>
        <taxon>Aspergillaceae</taxon>
        <taxon>Aspergillus</taxon>
        <taxon>Aspergillus subgen. Circumdati</taxon>
    </lineage>
</organism>
<sequence>MQSDDRSVREGSDSSQTFLMKMAQPTGELTHPSQQQQQQLLQQQSFRSIFGGASDTAEEIDTETDSNHRRPHSFGAAATTPAKLANKNVAPFLVKHIPEQYGPLGSRRTDKLEDLSSPNSKFCYRHRPDLKCRRQADEPSMDKLQRELETLPPSDQQGIAHVWSLFSAAPAKHRKLILQGIMAQCCFPQLSFVSATVRDLIRIDFLTALPPEISFKILCYLDTTSLCKAAQVSSRWRALADDDVVWHRMCEQHIHRKCKKCGWGLPLLERKRLRESKREIELRATTWDVSGPAQNAGGAECSAPHADDVITQKRKADSSDDETAIVKRHCSSLDARPEPDEDYYTTRYRPWKEVYKDRFKVGTNWKYGRCSTKVFKGHTNGVMCLQFEDNILATGSYDATIKIWDTETGEELRTLRGHQSGIRCLQFDDTKLISGSMDRSLKVWNWRTGECISTYTGHRGGVIGLHFDATILASASVDKTVKIWNFEDKSTFLLRGHTDWVNAVRVDTTSRTVFSASDDCTVRLWDLDTKACLRTFHGHVGQVQQVVPLPREFEFEDHDAECDNDNMSTTSGDTESNSLQATLGLESNATETSVFGPSFDNGRPAPPRYIVTSALDSTIRLWETTTGRCLRTFFGHLEGVWALGADTLRIVSGAEDRMVKIWDPRTGKCERTFTGHSGPVTCIGLGDSRFATGSEDCEVRMYSFRN</sequence>
<proteinExistence type="inferred from homology"/>
<accession>B8NGT5</accession>
<evidence type="ECO:0000250" key="1"/>
<evidence type="ECO:0000255" key="2">
    <source>
        <dbReference type="PROSITE-ProRule" id="PRU00080"/>
    </source>
</evidence>
<evidence type="ECO:0000256" key="3">
    <source>
        <dbReference type="SAM" id="MobiDB-lite"/>
    </source>
</evidence>
<evidence type="ECO:0000305" key="4"/>
<comment type="function">
    <text evidence="1">Component of the SCF(sconB) E3 ubiquitin ligase complex involved in the regulation of sulfur metabolite repression, probably by mediating the inactivation or degradation of the metR transcription factor.</text>
</comment>
<comment type="pathway">
    <text>Protein modification; protein ubiquitination.</text>
</comment>
<comment type="subunit">
    <text evidence="1">Component of the SCF(sconB) E3 ubiquitin ligase complex.</text>
</comment>
<comment type="similarity">
    <text evidence="4">Belongs to the WD repeat MET30/SCONB/SCON-2 family.</text>
</comment>
<gene>
    <name type="primary">sconB</name>
    <name type="ORF">AFLA_138030</name>
</gene>
<protein>
    <recommendedName>
        <fullName>Probable E3 ubiquitin ligase complex SCF subunit sconB</fullName>
    </recommendedName>
    <alternativeName>
        <fullName>Sulfur controller B</fullName>
    </alternativeName>
    <alternativeName>
        <fullName>Sulfur metabolite repression control protein B</fullName>
    </alternativeName>
</protein>
<keyword id="KW-0677">Repeat</keyword>
<keyword id="KW-0804">Transcription</keyword>
<keyword id="KW-0805">Transcription regulation</keyword>
<keyword id="KW-0833">Ubl conjugation pathway</keyword>
<keyword id="KW-0853">WD repeat</keyword>
<reference key="1">
    <citation type="journal article" date="2015" name="Genome Announc.">
        <title>Genome sequence of Aspergillus flavus NRRL 3357, a strain that causes aflatoxin contamination of food and feed.</title>
        <authorList>
            <person name="Nierman W.C."/>
            <person name="Yu J."/>
            <person name="Fedorova-Abrams N.D."/>
            <person name="Losada L."/>
            <person name="Cleveland T.E."/>
            <person name="Bhatnagar D."/>
            <person name="Bennett J.W."/>
            <person name="Dean R."/>
            <person name="Payne G.A."/>
        </authorList>
    </citation>
    <scope>NUCLEOTIDE SEQUENCE [LARGE SCALE GENOMIC DNA]</scope>
    <source>
        <strain>ATCC 200026 / FGSC A1120 / IAM 13836 / NRRL 3357 / JCM 12722 / SRRC 167</strain>
    </source>
</reference>